<evidence type="ECO:0000255" key="1">
    <source>
        <dbReference type="HAMAP-Rule" id="MF_01333"/>
    </source>
</evidence>
<evidence type="ECO:0000305" key="2"/>
<organism>
    <name type="scientific">Clostridium novyi (strain NT)</name>
    <dbReference type="NCBI Taxonomy" id="386415"/>
    <lineage>
        <taxon>Bacteria</taxon>
        <taxon>Bacillati</taxon>
        <taxon>Bacillota</taxon>
        <taxon>Clostridia</taxon>
        <taxon>Eubacteriales</taxon>
        <taxon>Clostridiaceae</taxon>
        <taxon>Clostridium</taxon>
    </lineage>
</organism>
<name>RL5_CLONN</name>
<dbReference type="EMBL" id="CP000382">
    <property type="protein sequence ID" value="ABK61871.1"/>
    <property type="molecule type" value="Genomic_DNA"/>
</dbReference>
<dbReference type="RefSeq" id="WP_011721223.1">
    <property type="nucleotide sequence ID" value="NC_008593.1"/>
</dbReference>
<dbReference type="SMR" id="A0PXV8"/>
<dbReference type="STRING" id="386415.NT01CX_1127"/>
<dbReference type="KEGG" id="cno:NT01CX_1127"/>
<dbReference type="eggNOG" id="COG0094">
    <property type="taxonomic scope" value="Bacteria"/>
</dbReference>
<dbReference type="HOGENOM" id="CLU_061015_2_1_9"/>
<dbReference type="Proteomes" id="UP000008220">
    <property type="component" value="Chromosome"/>
</dbReference>
<dbReference type="GO" id="GO:1990904">
    <property type="term" value="C:ribonucleoprotein complex"/>
    <property type="evidence" value="ECO:0007669"/>
    <property type="project" value="UniProtKB-KW"/>
</dbReference>
<dbReference type="GO" id="GO:0005840">
    <property type="term" value="C:ribosome"/>
    <property type="evidence" value="ECO:0007669"/>
    <property type="project" value="UniProtKB-KW"/>
</dbReference>
<dbReference type="GO" id="GO:0019843">
    <property type="term" value="F:rRNA binding"/>
    <property type="evidence" value="ECO:0007669"/>
    <property type="project" value="UniProtKB-UniRule"/>
</dbReference>
<dbReference type="GO" id="GO:0003735">
    <property type="term" value="F:structural constituent of ribosome"/>
    <property type="evidence" value="ECO:0007669"/>
    <property type="project" value="InterPro"/>
</dbReference>
<dbReference type="GO" id="GO:0000049">
    <property type="term" value="F:tRNA binding"/>
    <property type="evidence" value="ECO:0007669"/>
    <property type="project" value="UniProtKB-UniRule"/>
</dbReference>
<dbReference type="GO" id="GO:0006412">
    <property type="term" value="P:translation"/>
    <property type="evidence" value="ECO:0007669"/>
    <property type="project" value="UniProtKB-UniRule"/>
</dbReference>
<dbReference type="FunFam" id="3.30.1440.10:FF:000001">
    <property type="entry name" value="50S ribosomal protein L5"/>
    <property type="match status" value="1"/>
</dbReference>
<dbReference type="Gene3D" id="3.30.1440.10">
    <property type="match status" value="1"/>
</dbReference>
<dbReference type="HAMAP" id="MF_01333_B">
    <property type="entry name" value="Ribosomal_uL5_B"/>
    <property type="match status" value="1"/>
</dbReference>
<dbReference type="InterPro" id="IPR002132">
    <property type="entry name" value="Ribosomal_uL5"/>
</dbReference>
<dbReference type="InterPro" id="IPR020930">
    <property type="entry name" value="Ribosomal_uL5_bac-type"/>
</dbReference>
<dbReference type="InterPro" id="IPR031309">
    <property type="entry name" value="Ribosomal_uL5_C"/>
</dbReference>
<dbReference type="InterPro" id="IPR020929">
    <property type="entry name" value="Ribosomal_uL5_CS"/>
</dbReference>
<dbReference type="InterPro" id="IPR022803">
    <property type="entry name" value="Ribosomal_uL5_dom_sf"/>
</dbReference>
<dbReference type="InterPro" id="IPR031310">
    <property type="entry name" value="Ribosomal_uL5_N"/>
</dbReference>
<dbReference type="NCBIfam" id="NF000585">
    <property type="entry name" value="PRK00010.1"/>
    <property type="match status" value="1"/>
</dbReference>
<dbReference type="PANTHER" id="PTHR11994">
    <property type="entry name" value="60S RIBOSOMAL PROTEIN L11-RELATED"/>
    <property type="match status" value="1"/>
</dbReference>
<dbReference type="Pfam" id="PF00281">
    <property type="entry name" value="Ribosomal_L5"/>
    <property type="match status" value="1"/>
</dbReference>
<dbReference type="Pfam" id="PF00673">
    <property type="entry name" value="Ribosomal_L5_C"/>
    <property type="match status" value="1"/>
</dbReference>
<dbReference type="PIRSF" id="PIRSF002161">
    <property type="entry name" value="Ribosomal_L5"/>
    <property type="match status" value="1"/>
</dbReference>
<dbReference type="SUPFAM" id="SSF55282">
    <property type="entry name" value="RL5-like"/>
    <property type="match status" value="1"/>
</dbReference>
<dbReference type="PROSITE" id="PS00358">
    <property type="entry name" value="RIBOSOMAL_L5"/>
    <property type="match status" value="1"/>
</dbReference>
<keyword id="KW-1185">Reference proteome</keyword>
<keyword id="KW-0687">Ribonucleoprotein</keyword>
<keyword id="KW-0689">Ribosomal protein</keyword>
<keyword id="KW-0694">RNA-binding</keyword>
<keyword id="KW-0699">rRNA-binding</keyword>
<keyword id="KW-0820">tRNA-binding</keyword>
<gene>
    <name evidence="1" type="primary">rplE</name>
    <name type="ordered locus">NT01CX_1127</name>
</gene>
<accession>A0PXV8</accession>
<proteinExistence type="inferred from homology"/>
<comment type="function">
    <text evidence="1">This is one of the proteins that bind and probably mediate the attachment of the 5S RNA into the large ribosomal subunit, where it forms part of the central protuberance. In the 70S ribosome it contacts protein S13 of the 30S subunit (bridge B1b), connecting the 2 subunits; this bridge is implicated in subunit movement. Contacts the P site tRNA; the 5S rRNA and some of its associated proteins might help stabilize positioning of ribosome-bound tRNAs.</text>
</comment>
<comment type="subunit">
    <text evidence="1">Part of the 50S ribosomal subunit; part of the 5S rRNA/L5/L18/L25 subcomplex. Contacts the 5S rRNA and the P site tRNA. Forms a bridge to the 30S subunit in the 70S ribosome.</text>
</comment>
<comment type="similarity">
    <text evidence="1">Belongs to the universal ribosomal protein uL5 family.</text>
</comment>
<protein>
    <recommendedName>
        <fullName evidence="1">Large ribosomal subunit protein uL5</fullName>
    </recommendedName>
    <alternativeName>
        <fullName evidence="2">50S ribosomal protein L5</fullName>
    </alternativeName>
</protein>
<reference key="1">
    <citation type="journal article" date="2006" name="Nat. Biotechnol.">
        <title>The genome and transcriptomes of the anti-tumor agent Clostridium novyi-NT.</title>
        <authorList>
            <person name="Bettegowda C."/>
            <person name="Huang X."/>
            <person name="Lin J."/>
            <person name="Cheong I."/>
            <person name="Kohli M."/>
            <person name="Szabo S.A."/>
            <person name="Zhang X."/>
            <person name="Diaz L.A. Jr."/>
            <person name="Velculescu V.E."/>
            <person name="Parmigiani G."/>
            <person name="Kinzler K.W."/>
            <person name="Vogelstein B."/>
            <person name="Zhou S."/>
        </authorList>
    </citation>
    <scope>NUCLEOTIDE SEQUENCE [LARGE SCALE GENOMIC DNA]</scope>
    <source>
        <strain>NT</strain>
    </source>
</reference>
<sequence length="179" mass="20440">MSRLQEKYNKEVIPALMEKFGYKNIMQVPKLEKIVVNMGVGEAKDNSKVLESAIADLQQITGQKPVITRAKKSVANFKIRQNMPIGCKVTLRKDMMFEFADKLMNIALPRVRDFRGVSAKSFDGRGNYALGIKEQIIFPEIEYDKIDKVRGMDIIFVTTAKTDEEARELLRYLGMPFAQ</sequence>
<feature type="chain" id="PRO_1000052722" description="Large ribosomal subunit protein uL5">
    <location>
        <begin position="1"/>
        <end position="179"/>
    </location>
</feature>